<feature type="signal peptide" evidence="4">
    <location>
        <begin position="1"/>
        <end position="20"/>
    </location>
</feature>
<feature type="propeptide" id="PRO_5000093673" evidence="6">
    <location>
        <begin position="21"/>
        <end position="34"/>
    </location>
</feature>
<feature type="chain" id="PRO_5000093674" description="U3-agatoxin-Ao1j" evidence="6">
    <location>
        <begin position="35"/>
        <end position="71"/>
    </location>
</feature>
<feature type="modified residue" description="Serine amide" evidence="3">
    <location>
        <position position="71"/>
    </location>
</feature>
<feature type="disulfide bond" evidence="2">
    <location>
        <begin position="36"/>
        <end position="52"/>
    </location>
</feature>
<feature type="disulfide bond" evidence="2">
    <location>
        <begin position="43"/>
        <end position="57"/>
    </location>
</feature>
<feature type="disulfide bond" evidence="2">
    <location>
        <begin position="51"/>
        <end position="67"/>
    </location>
</feature>
<feature type="disulfide bond" evidence="2">
    <location>
        <begin position="59"/>
        <end position="65"/>
    </location>
</feature>
<comment type="function">
    <text evidence="1">Insecticidal neurotoxin that induces an irreversible spastic paralysis when injected into insects. Modifies presynaptic voltage-gated sodium channels (Nav), causing them to open at the normal resting potential of the nerve. This leads to spontaneous release of neurotransmitter and repetitive action potentials in motor neurons (By similarity).</text>
</comment>
<comment type="subcellular location">
    <subcellularLocation>
        <location evidence="1">Secreted</location>
    </subcellularLocation>
</comment>
<comment type="tissue specificity">
    <text>Expressed by the venom gland.</text>
</comment>
<comment type="domain">
    <text evidence="1">The presence of a 'disulfide through disulfide knot' structurally defines this protein as a knottin.</text>
</comment>
<comment type="similarity">
    <text evidence="5">Belongs to the neurotoxin 07 (Beta/delta-agtx) family. 03 (aga-4) subfamily. Aga sub-subfamily.</text>
</comment>
<evidence type="ECO:0000250" key="1"/>
<evidence type="ECO:0000250" key="2">
    <source>
        <dbReference type="UniProtKB" id="P11061"/>
    </source>
</evidence>
<evidence type="ECO:0000250" key="3">
    <source>
        <dbReference type="UniProtKB" id="Q5Y4V6"/>
    </source>
</evidence>
<evidence type="ECO:0000255" key="4"/>
<evidence type="ECO:0000305" key="5"/>
<evidence type="ECO:0000305" key="6">
    <source>
    </source>
</evidence>
<evidence type="ECO:0000312" key="7">
    <source>
        <dbReference type="EMBL" id="AAU87895.1"/>
    </source>
</evidence>
<reference key="1">
    <citation type="journal article" date="2005" name="Proteins">
        <title>A novel strategy for the identification of toxinlike structures in spider venom.</title>
        <authorList>
            <person name="Kozlov S.A."/>
            <person name="Malyavka A."/>
            <person name="McCutchen B."/>
            <person name="Lu A."/>
            <person name="Schepers E."/>
            <person name="Herrmann R."/>
            <person name="Grishin E.V."/>
        </authorList>
    </citation>
    <scope>NUCLEOTIDE SEQUENCE [MRNA]</scope>
    <source>
        <tissue>Venom gland</tissue>
    </source>
</reference>
<sequence>MRTIISLLLLSAMVFAVIEAISLEEGLQLFEGERGCVGENQQCADWARPHCCSGYYCTCRYFPKCICRKDSGK</sequence>
<proteinExistence type="evidence at transcript level"/>
<keyword id="KW-0027">Amidation</keyword>
<keyword id="KW-1015">Disulfide bond</keyword>
<keyword id="KW-0872">Ion channel impairing toxin</keyword>
<keyword id="KW-0960">Knottin</keyword>
<keyword id="KW-0528">Neurotoxin</keyword>
<keyword id="KW-0638">Presynaptic neurotoxin</keyword>
<keyword id="KW-0964">Secreted</keyword>
<keyword id="KW-0732">Signal</keyword>
<keyword id="KW-0800">Toxin</keyword>
<keyword id="KW-0738">Voltage-gated sodium channel impairing toxin</keyword>
<organism>
    <name type="scientific">Agelena orientalis</name>
    <name type="common">Funnel-web spider</name>
    <dbReference type="NCBI Taxonomy" id="293813"/>
    <lineage>
        <taxon>Eukaryota</taxon>
        <taxon>Metazoa</taxon>
        <taxon>Ecdysozoa</taxon>
        <taxon>Arthropoda</taxon>
        <taxon>Chelicerata</taxon>
        <taxon>Arachnida</taxon>
        <taxon>Araneae</taxon>
        <taxon>Araneomorphae</taxon>
        <taxon>Entelegynae</taxon>
        <taxon>Agelenidae</taxon>
        <taxon>Agelena</taxon>
    </lineage>
</organism>
<accession>Q5Y4U9</accession>
<protein>
    <recommendedName>
        <fullName evidence="5">U3-agatoxin-Ao1j</fullName>
        <shortName evidence="5">U3-AGTX-Ao1j</shortName>
    </recommendedName>
    <alternativeName>
        <fullName evidence="7">Mu-2Aaga_11</fullName>
    </alternativeName>
</protein>
<name>T4G1J_AGEOR</name>
<dbReference type="EMBL" id="AY681335">
    <property type="protein sequence ID" value="AAU87895.1"/>
    <property type="molecule type" value="mRNA"/>
</dbReference>
<dbReference type="SMR" id="Q5Y4U9"/>
<dbReference type="ArachnoServer" id="AS000077">
    <property type="toxin name" value="U3-agatoxin-Ao1j"/>
</dbReference>
<dbReference type="GO" id="GO:0005576">
    <property type="term" value="C:extracellular region"/>
    <property type="evidence" value="ECO:0007669"/>
    <property type="project" value="UniProtKB-SubCell"/>
</dbReference>
<dbReference type="GO" id="GO:0044231">
    <property type="term" value="C:host cell presynaptic membrane"/>
    <property type="evidence" value="ECO:0007669"/>
    <property type="project" value="UniProtKB-KW"/>
</dbReference>
<dbReference type="GO" id="GO:0017080">
    <property type="term" value="F:sodium channel regulator activity"/>
    <property type="evidence" value="ECO:0007669"/>
    <property type="project" value="UniProtKB-KW"/>
</dbReference>
<dbReference type="GO" id="GO:0090729">
    <property type="term" value="F:toxin activity"/>
    <property type="evidence" value="ECO:0007669"/>
    <property type="project" value="UniProtKB-KW"/>
</dbReference>
<dbReference type="InterPro" id="IPR016328">
    <property type="entry name" value="Beta/delta-agatoxin_fam"/>
</dbReference>
<dbReference type="Pfam" id="PF05980">
    <property type="entry name" value="Toxin_7"/>
    <property type="match status" value="1"/>
</dbReference>
<dbReference type="SUPFAM" id="SSF57059">
    <property type="entry name" value="omega toxin-like"/>
    <property type="match status" value="1"/>
</dbReference>
<dbReference type="PROSITE" id="PS60015">
    <property type="entry name" value="MU_AGATOXIN"/>
    <property type="match status" value="1"/>
</dbReference>